<evidence type="ECO:0000255" key="1">
    <source>
        <dbReference type="HAMAP-Rule" id="MF_00016"/>
    </source>
</evidence>
<sequence length="337" mass="37820">MIEADRLIAADNPVFRDEEVIDRAIRPKKLEDYRGQDHVRSQMEIFIKAAQMRQEPLDHLLIFGPPGLGKTTLANIVANEMGVSIRTTSGPVLEKAGDLAALLTNLEENDILFIDEIHRLSPVVEEILYPAMEDYQLDIMIGEGPAARSIKIDLPPFTLIGATTRAGSLTSPLRDRFGIVQRLEYYKVDDLQYIVQRSADCLNLSMESEGALEVARRARGTPRIANRLLRRVRDYADVMSDSHISPDIADKALNMLDVDVCGFDYMDRKLLLAIMEKFNGGPVGLDNVAAAIGEEKDTIEDVIEPYLIQQGYLQRTPRGRIVSDRAYLHFGIDRPDK</sequence>
<proteinExistence type="inferred from homology"/>
<keyword id="KW-0067">ATP-binding</keyword>
<keyword id="KW-0963">Cytoplasm</keyword>
<keyword id="KW-0227">DNA damage</keyword>
<keyword id="KW-0233">DNA recombination</keyword>
<keyword id="KW-0234">DNA repair</keyword>
<keyword id="KW-0238">DNA-binding</keyword>
<keyword id="KW-0378">Hydrolase</keyword>
<keyword id="KW-0547">Nucleotide-binding</keyword>
<organism>
    <name type="scientific">Aliivibrio salmonicida (strain LFI1238)</name>
    <name type="common">Vibrio salmonicida (strain LFI1238)</name>
    <dbReference type="NCBI Taxonomy" id="316275"/>
    <lineage>
        <taxon>Bacteria</taxon>
        <taxon>Pseudomonadati</taxon>
        <taxon>Pseudomonadota</taxon>
        <taxon>Gammaproteobacteria</taxon>
        <taxon>Vibrionales</taxon>
        <taxon>Vibrionaceae</taxon>
        <taxon>Aliivibrio</taxon>
    </lineage>
</organism>
<dbReference type="EC" id="3.6.4.-" evidence="1"/>
<dbReference type="EMBL" id="FM178379">
    <property type="protein sequence ID" value="CAQ79574.1"/>
    <property type="molecule type" value="Genomic_DNA"/>
</dbReference>
<dbReference type="RefSeq" id="WP_012550464.1">
    <property type="nucleotide sequence ID" value="NC_011312.1"/>
</dbReference>
<dbReference type="SMR" id="B6EGJ4"/>
<dbReference type="KEGG" id="vsa:VSAL_I1889"/>
<dbReference type="eggNOG" id="COG2255">
    <property type="taxonomic scope" value="Bacteria"/>
</dbReference>
<dbReference type="HOGENOM" id="CLU_055599_1_0_6"/>
<dbReference type="Proteomes" id="UP000001730">
    <property type="component" value="Chromosome 1"/>
</dbReference>
<dbReference type="GO" id="GO:0005737">
    <property type="term" value="C:cytoplasm"/>
    <property type="evidence" value="ECO:0007669"/>
    <property type="project" value="UniProtKB-SubCell"/>
</dbReference>
<dbReference type="GO" id="GO:0048476">
    <property type="term" value="C:Holliday junction resolvase complex"/>
    <property type="evidence" value="ECO:0007669"/>
    <property type="project" value="UniProtKB-UniRule"/>
</dbReference>
<dbReference type="GO" id="GO:0005524">
    <property type="term" value="F:ATP binding"/>
    <property type="evidence" value="ECO:0007669"/>
    <property type="project" value="UniProtKB-UniRule"/>
</dbReference>
<dbReference type="GO" id="GO:0016887">
    <property type="term" value="F:ATP hydrolysis activity"/>
    <property type="evidence" value="ECO:0007669"/>
    <property type="project" value="InterPro"/>
</dbReference>
<dbReference type="GO" id="GO:0000400">
    <property type="term" value="F:four-way junction DNA binding"/>
    <property type="evidence" value="ECO:0007669"/>
    <property type="project" value="UniProtKB-UniRule"/>
</dbReference>
<dbReference type="GO" id="GO:0009378">
    <property type="term" value="F:four-way junction helicase activity"/>
    <property type="evidence" value="ECO:0007669"/>
    <property type="project" value="InterPro"/>
</dbReference>
<dbReference type="GO" id="GO:0006310">
    <property type="term" value="P:DNA recombination"/>
    <property type="evidence" value="ECO:0007669"/>
    <property type="project" value="UniProtKB-UniRule"/>
</dbReference>
<dbReference type="GO" id="GO:0006281">
    <property type="term" value="P:DNA repair"/>
    <property type="evidence" value="ECO:0007669"/>
    <property type="project" value="UniProtKB-UniRule"/>
</dbReference>
<dbReference type="CDD" id="cd00009">
    <property type="entry name" value="AAA"/>
    <property type="match status" value="1"/>
</dbReference>
<dbReference type="FunFam" id="1.10.10.10:FF:000086">
    <property type="entry name" value="Holliday junction ATP-dependent DNA helicase RuvB"/>
    <property type="match status" value="1"/>
</dbReference>
<dbReference type="FunFam" id="1.10.8.60:FF:000023">
    <property type="entry name" value="Holliday junction ATP-dependent DNA helicase RuvB"/>
    <property type="match status" value="1"/>
</dbReference>
<dbReference type="FunFam" id="3.40.50.300:FF:000073">
    <property type="entry name" value="Holliday junction ATP-dependent DNA helicase RuvB"/>
    <property type="match status" value="1"/>
</dbReference>
<dbReference type="Gene3D" id="1.10.8.60">
    <property type="match status" value="1"/>
</dbReference>
<dbReference type="Gene3D" id="3.40.50.300">
    <property type="entry name" value="P-loop containing nucleotide triphosphate hydrolases"/>
    <property type="match status" value="1"/>
</dbReference>
<dbReference type="Gene3D" id="1.10.10.10">
    <property type="entry name" value="Winged helix-like DNA-binding domain superfamily/Winged helix DNA-binding domain"/>
    <property type="match status" value="1"/>
</dbReference>
<dbReference type="HAMAP" id="MF_00016">
    <property type="entry name" value="DNA_HJ_migration_RuvB"/>
    <property type="match status" value="1"/>
</dbReference>
<dbReference type="InterPro" id="IPR003593">
    <property type="entry name" value="AAA+_ATPase"/>
</dbReference>
<dbReference type="InterPro" id="IPR041445">
    <property type="entry name" value="AAA_lid_4"/>
</dbReference>
<dbReference type="InterPro" id="IPR004605">
    <property type="entry name" value="DNA_helicase_Holl-junc_RuvB"/>
</dbReference>
<dbReference type="InterPro" id="IPR027417">
    <property type="entry name" value="P-loop_NTPase"/>
</dbReference>
<dbReference type="InterPro" id="IPR008824">
    <property type="entry name" value="RuvB-like_N"/>
</dbReference>
<dbReference type="InterPro" id="IPR008823">
    <property type="entry name" value="RuvB_C"/>
</dbReference>
<dbReference type="InterPro" id="IPR036388">
    <property type="entry name" value="WH-like_DNA-bd_sf"/>
</dbReference>
<dbReference type="InterPro" id="IPR036390">
    <property type="entry name" value="WH_DNA-bd_sf"/>
</dbReference>
<dbReference type="NCBIfam" id="NF000868">
    <property type="entry name" value="PRK00080.1"/>
    <property type="match status" value="1"/>
</dbReference>
<dbReference type="NCBIfam" id="TIGR00635">
    <property type="entry name" value="ruvB"/>
    <property type="match status" value="1"/>
</dbReference>
<dbReference type="PANTHER" id="PTHR42848">
    <property type="match status" value="1"/>
</dbReference>
<dbReference type="PANTHER" id="PTHR42848:SF1">
    <property type="entry name" value="HOLLIDAY JUNCTION BRANCH MIGRATION COMPLEX SUBUNIT RUVB"/>
    <property type="match status" value="1"/>
</dbReference>
<dbReference type="Pfam" id="PF17864">
    <property type="entry name" value="AAA_lid_4"/>
    <property type="match status" value="1"/>
</dbReference>
<dbReference type="Pfam" id="PF05491">
    <property type="entry name" value="RuvB_C"/>
    <property type="match status" value="1"/>
</dbReference>
<dbReference type="Pfam" id="PF05496">
    <property type="entry name" value="RuvB_N"/>
    <property type="match status" value="1"/>
</dbReference>
<dbReference type="SMART" id="SM00382">
    <property type="entry name" value="AAA"/>
    <property type="match status" value="1"/>
</dbReference>
<dbReference type="SUPFAM" id="SSF52540">
    <property type="entry name" value="P-loop containing nucleoside triphosphate hydrolases"/>
    <property type="match status" value="1"/>
</dbReference>
<dbReference type="SUPFAM" id="SSF46785">
    <property type="entry name" value="Winged helix' DNA-binding domain"/>
    <property type="match status" value="1"/>
</dbReference>
<accession>B6EGJ4</accession>
<name>RUVB_ALISL</name>
<feature type="chain" id="PRO_1000089613" description="Holliday junction branch migration complex subunit RuvB">
    <location>
        <begin position="1"/>
        <end position="337"/>
    </location>
</feature>
<feature type="region of interest" description="Large ATPase domain (RuvB-L)" evidence="1">
    <location>
        <begin position="4"/>
        <end position="186"/>
    </location>
</feature>
<feature type="region of interest" description="Small ATPAse domain (RuvB-S)" evidence="1">
    <location>
        <begin position="187"/>
        <end position="257"/>
    </location>
</feature>
<feature type="region of interest" description="Head domain (RuvB-H)" evidence="1">
    <location>
        <begin position="260"/>
        <end position="337"/>
    </location>
</feature>
<feature type="binding site" evidence="1">
    <location>
        <position position="25"/>
    </location>
    <ligand>
        <name>ATP</name>
        <dbReference type="ChEBI" id="CHEBI:30616"/>
    </ligand>
</feature>
<feature type="binding site" evidence="1">
    <location>
        <position position="26"/>
    </location>
    <ligand>
        <name>ATP</name>
        <dbReference type="ChEBI" id="CHEBI:30616"/>
    </ligand>
</feature>
<feature type="binding site" evidence="1">
    <location>
        <position position="67"/>
    </location>
    <ligand>
        <name>ATP</name>
        <dbReference type="ChEBI" id="CHEBI:30616"/>
    </ligand>
</feature>
<feature type="binding site" evidence="1">
    <location>
        <position position="70"/>
    </location>
    <ligand>
        <name>ATP</name>
        <dbReference type="ChEBI" id="CHEBI:30616"/>
    </ligand>
</feature>
<feature type="binding site" evidence="1">
    <location>
        <position position="71"/>
    </location>
    <ligand>
        <name>ATP</name>
        <dbReference type="ChEBI" id="CHEBI:30616"/>
    </ligand>
</feature>
<feature type="binding site" evidence="1">
    <location>
        <position position="71"/>
    </location>
    <ligand>
        <name>Mg(2+)</name>
        <dbReference type="ChEBI" id="CHEBI:18420"/>
    </ligand>
</feature>
<feature type="binding site" evidence="1">
    <location>
        <position position="72"/>
    </location>
    <ligand>
        <name>ATP</name>
        <dbReference type="ChEBI" id="CHEBI:30616"/>
    </ligand>
</feature>
<feature type="binding site" evidence="1">
    <location>
        <begin position="133"/>
        <end position="135"/>
    </location>
    <ligand>
        <name>ATP</name>
        <dbReference type="ChEBI" id="CHEBI:30616"/>
    </ligand>
</feature>
<feature type="binding site" evidence="1">
    <location>
        <position position="176"/>
    </location>
    <ligand>
        <name>ATP</name>
        <dbReference type="ChEBI" id="CHEBI:30616"/>
    </ligand>
</feature>
<feature type="binding site" evidence="1">
    <location>
        <position position="186"/>
    </location>
    <ligand>
        <name>ATP</name>
        <dbReference type="ChEBI" id="CHEBI:30616"/>
    </ligand>
</feature>
<feature type="binding site" evidence="1">
    <location>
        <position position="223"/>
    </location>
    <ligand>
        <name>ATP</name>
        <dbReference type="ChEBI" id="CHEBI:30616"/>
    </ligand>
</feature>
<feature type="binding site" evidence="1">
    <location>
        <position position="315"/>
    </location>
    <ligand>
        <name>DNA</name>
        <dbReference type="ChEBI" id="CHEBI:16991"/>
    </ligand>
</feature>
<feature type="binding site" evidence="1">
    <location>
        <position position="320"/>
    </location>
    <ligand>
        <name>DNA</name>
        <dbReference type="ChEBI" id="CHEBI:16991"/>
    </ligand>
</feature>
<reference key="1">
    <citation type="journal article" date="2008" name="BMC Genomics">
        <title>The genome sequence of the fish pathogen Aliivibrio salmonicida strain LFI1238 shows extensive evidence of gene decay.</title>
        <authorList>
            <person name="Hjerde E."/>
            <person name="Lorentzen M.S."/>
            <person name="Holden M.T."/>
            <person name="Seeger K."/>
            <person name="Paulsen S."/>
            <person name="Bason N."/>
            <person name="Churcher C."/>
            <person name="Harris D."/>
            <person name="Norbertczak H."/>
            <person name="Quail M.A."/>
            <person name="Sanders S."/>
            <person name="Thurston S."/>
            <person name="Parkhill J."/>
            <person name="Willassen N.P."/>
            <person name="Thomson N.R."/>
        </authorList>
    </citation>
    <scope>NUCLEOTIDE SEQUENCE [LARGE SCALE GENOMIC DNA]</scope>
    <source>
        <strain>LFI1238</strain>
    </source>
</reference>
<gene>
    <name evidence="1" type="primary">ruvB</name>
    <name type="ordered locus">VSAL_I1889</name>
</gene>
<comment type="function">
    <text evidence="1">The RuvA-RuvB-RuvC complex processes Holliday junction (HJ) DNA during genetic recombination and DNA repair, while the RuvA-RuvB complex plays an important role in the rescue of blocked DNA replication forks via replication fork reversal (RFR). RuvA specifically binds to HJ cruciform DNA, conferring on it an open structure. The RuvB hexamer acts as an ATP-dependent pump, pulling dsDNA into and through the RuvAB complex. RuvB forms 2 homohexamers on either side of HJ DNA bound by 1 or 2 RuvA tetramers; 4 subunits per hexamer contact DNA at a time. Coordinated motions by a converter formed by DNA-disengaged RuvB subunits stimulates ATP hydrolysis and nucleotide exchange. Immobilization of the converter enables RuvB to convert the ATP-contained energy into a lever motion, pulling 2 nucleotides of DNA out of the RuvA tetramer per ATP hydrolyzed, thus driving DNA branch migration. The RuvB motors rotate together with the DNA substrate, which together with the progressing nucleotide cycle form the mechanistic basis for DNA recombination by continuous HJ branch migration. Branch migration allows RuvC to scan DNA until it finds its consensus sequence, where it cleaves and resolves cruciform DNA.</text>
</comment>
<comment type="catalytic activity">
    <reaction evidence="1">
        <text>ATP + H2O = ADP + phosphate + H(+)</text>
        <dbReference type="Rhea" id="RHEA:13065"/>
        <dbReference type="ChEBI" id="CHEBI:15377"/>
        <dbReference type="ChEBI" id="CHEBI:15378"/>
        <dbReference type="ChEBI" id="CHEBI:30616"/>
        <dbReference type="ChEBI" id="CHEBI:43474"/>
        <dbReference type="ChEBI" id="CHEBI:456216"/>
    </reaction>
</comment>
<comment type="subunit">
    <text evidence="1">Homohexamer. Forms an RuvA(8)-RuvB(12)-Holliday junction (HJ) complex. HJ DNA is sandwiched between 2 RuvA tetramers; dsDNA enters through RuvA and exits via RuvB. An RuvB hexamer assembles on each DNA strand where it exits the tetramer. Each RuvB hexamer is contacted by two RuvA subunits (via domain III) on 2 adjacent RuvB subunits; this complex drives branch migration. In the full resolvosome a probable DNA-RuvA(4)-RuvB(12)-RuvC(2) complex forms which resolves the HJ.</text>
</comment>
<comment type="subcellular location">
    <subcellularLocation>
        <location evidence="1">Cytoplasm</location>
    </subcellularLocation>
</comment>
<comment type="domain">
    <text evidence="1">Has 3 domains, the large (RuvB-L) and small ATPase (RuvB-S) domains and the C-terminal head (RuvB-H) domain. The head domain binds DNA, while the ATPase domains jointly bind ATP, ADP or are empty depending on the state of the subunit in the translocation cycle. During a single DNA translocation step the structure of each domain remains the same, but their relative positions change.</text>
</comment>
<comment type="similarity">
    <text evidence="1">Belongs to the RuvB family.</text>
</comment>
<protein>
    <recommendedName>
        <fullName evidence="1">Holliday junction branch migration complex subunit RuvB</fullName>
        <ecNumber evidence="1">3.6.4.-</ecNumber>
    </recommendedName>
</protein>